<sequence length="38" mass="4378">MKVLASVKRICRNCKIIKRNGVVRVICSSDPRHKQRQG</sequence>
<dbReference type="EMBL" id="AM260479">
    <property type="protein sequence ID" value="CAJ94530.1"/>
    <property type="molecule type" value="Genomic_DNA"/>
</dbReference>
<dbReference type="RefSeq" id="WP_008642959.1">
    <property type="nucleotide sequence ID" value="NZ_CP039287.1"/>
</dbReference>
<dbReference type="SMR" id="Q0K641"/>
<dbReference type="STRING" id="381666.H16_A3462"/>
<dbReference type="GeneID" id="98344088"/>
<dbReference type="KEGG" id="reh:H16_A3462"/>
<dbReference type="eggNOG" id="COG0257">
    <property type="taxonomic scope" value="Bacteria"/>
</dbReference>
<dbReference type="HOGENOM" id="CLU_135723_6_2_4"/>
<dbReference type="OrthoDB" id="9802520at2"/>
<dbReference type="Proteomes" id="UP000008210">
    <property type="component" value="Chromosome 1"/>
</dbReference>
<dbReference type="GO" id="GO:0005737">
    <property type="term" value="C:cytoplasm"/>
    <property type="evidence" value="ECO:0007669"/>
    <property type="project" value="UniProtKB-ARBA"/>
</dbReference>
<dbReference type="GO" id="GO:1990904">
    <property type="term" value="C:ribonucleoprotein complex"/>
    <property type="evidence" value="ECO:0007669"/>
    <property type="project" value="UniProtKB-KW"/>
</dbReference>
<dbReference type="GO" id="GO:0005840">
    <property type="term" value="C:ribosome"/>
    <property type="evidence" value="ECO:0007669"/>
    <property type="project" value="UniProtKB-KW"/>
</dbReference>
<dbReference type="GO" id="GO:0003735">
    <property type="term" value="F:structural constituent of ribosome"/>
    <property type="evidence" value="ECO:0007669"/>
    <property type="project" value="InterPro"/>
</dbReference>
<dbReference type="GO" id="GO:0006412">
    <property type="term" value="P:translation"/>
    <property type="evidence" value="ECO:0007669"/>
    <property type="project" value="UniProtKB-UniRule"/>
</dbReference>
<dbReference type="HAMAP" id="MF_00251">
    <property type="entry name" value="Ribosomal_bL36"/>
    <property type="match status" value="1"/>
</dbReference>
<dbReference type="InterPro" id="IPR000473">
    <property type="entry name" value="Ribosomal_bL36"/>
</dbReference>
<dbReference type="InterPro" id="IPR035977">
    <property type="entry name" value="Ribosomal_bL36_sp"/>
</dbReference>
<dbReference type="NCBIfam" id="TIGR01022">
    <property type="entry name" value="rpmJ_bact"/>
    <property type="match status" value="1"/>
</dbReference>
<dbReference type="PANTHER" id="PTHR42888">
    <property type="entry name" value="50S RIBOSOMAL PROTEIN L36, CHLOROPLASTIC"/>
    <property type="match status" value="1"/>
</dbReference>
<dbReference type="PANTHER" id="PTHR42888:SF1">
    <property type="entry name" value="LARGE RIBOSOMAL SUBUNIT PROTEIN BL36C"/>
    <property type="match status" value="1"/>
</dbReference>
<dbReference type="Pfam" id="PF00444">
    <property type="entry name" value="Ribosomal_L36"/>
    <property type="match status" value="1"/>
</dbReference>
<dbReference type="SUPFAM" id="SSF57840">
    <property type="entry name" value="Ribosomal protein L36"/>
    <property type="match status" value="1"/>
</dbReference>
<dbReference type="PROSITE" id="PS00828">
    <property type="entry name" value="RIBOSOMAL_L36"/>
    <property type="match status" value="1"/>
</dbReference>
<gene>
    <name evidence="1" type="primary">rpmJ</name>
    <name type="ordered locus">H16_A3462</name>
</gene>
<organism>
    <name type="scientific">Cupriavidus necator (strain ATCC 17699 / DSM 428 / KCTC 22496 / NCIMB 10442 / H16 / Stanier 337)</name>
    <name type="common">Ralstonia eutropha</name>
    <dbReference type="NCBI Taxonomy" id="381666"/>
    <lineage>
        <taxon>Bacteria</taxon>
        <taxon>Pseudomonadati</taxon>
        <taxon>Pseudomonadota</taxon>
        <taxon>Betaproteobacteria</taxon>
        <taxon>Burkholderiales</taxon>
        <taxon>Burkholderiaceae</taxon>
        <taxon>Cupriavidus</taxon>
    </lineage>
</organism>
<proteinExistence type="inferred from homology"/>
<reference key="1">
    <citation type="journal article" date="2006" name="Nat. Biotechnol.">
        <title>Genome sequence of the bioplastic-producing 'Knallgas' bacterium Ralstonia eutropha H16.</title>
        <authorList>
            <person name="Pohlmann A."/>
            <person name="Fricke W.F."/>
            <person name="Reinecke F."/>
            <person name="Kusian B."/>
            <person name="Liesegang H."/>
            <person name="Cramm R."/>
            <person name="Eitinger T."/>
            <person name="Ewering C."/>
            <person name="Poetter M."/>
            <person name="Schwartz E."/>
            <person name="Strittmatter A."/>
            <person name="Voss I."/>
            <person name="Gottschalk G."/>
            <person name="Steinbuechel A."/>
            <person name="Friedrich B."/>
            <person name="Bowien B."/>
        </authorList>
    </citation>
    <scope>NUCLEOTIDE SEQUENCE [LARGE SCALE GENOMIC DNA]</scope>
    <source>
        <strain>ATCC 17699 / DSM 428 / KCTC 22496 / NCIMB 10442 / H16 / Stanier 337</strain>
    </source>
</reference>
<accession>Q0K641</accession>
<keyword id="KW-1185">Reference proteome</keyword>
<keyword id="KW-0687">Ribonucleoprotein</keyword>
<keyword id="KW-0689">Ribosomal protein</keyword>
<protein>
    <recommendedName>
        <fullName evidence="1">Large ribosomal subunit protein bL36</fullName>
    </recommendedName>
    <alternativeName>
        <fullName evidence="2">50S ribosomal protein L36</fullName>
    </alternativeName>
</protein>
<feature type="chain" id="PRO_0000302277" description="Large ribosomal subunit protein bL36">
    <location>
        <begin position="1"/>
        <end position="38"/>
    </location>
</feature>
<evidence type="ECO:0000255" key="1">
    <source>
        <dbReference type="HAMAP-Rule" id="MF_00251"/>
    </source>
</evidence>
<evidence type="ECO:0000305" key="2"/>
<comment type="similarity">
    <text evidence="1">Belongs to the bacterial ribosomal protein bL36 family.</text>
</comment>
<name>RL36_CUPNH</name>